<dbReference type="EC" id="3.2.2.27" evidence="1"/>
<dbReference type="EMBL" id="CP000901">
    <property type="protein sequence ID" value="ABX86773.1"/>
    <property type="molecule type" value="Genomic_DNA"/>
</dbReference>
<dbReference type="RefSeq" id="WP_002209663.1">
    <property type="nucleotide sequence ID" value="NZ_CP009935.1"/>
</dbReference>
<dbReference type="SMR" id="A9R3Y6"/>
<dbReference type="GeneID" id="57975987"/>
<dbReference type="KEGG" id="ypg:YpAngola_A3595"/>
<dbReference type="PATRIC" id="fig|349746.12.peg.294"/>
<dbReference type="GO" id="GO:0005737">
    <property type="term" value="C:cytoplasm"/>
    <property type="evidence" value="ECO:0007669"/>
    <property type="project" value="UniProtKB-SubCell"/>
</dbReference>
<dbReference type="GO" id="GO:0004844">
    <property type="term" value="F:uracil DNA N-glycosylase activity"/>
    <property type="evidence" value="ECO:0007669"/>
    <property type="project" value="UniProtKB-UniRule"/>
</dbReference>
<dbReference type="GO" id="GO:0097510">
    <property type="term" value="P:base-excision repair, AP site formation via deaminated base removal"/>
    <property type="evidence" value="ECO:0007669"/>
    <property type="project" value="TreeGrafter"/>
</dbReference>
<dbReference type="CDD" id="cd10027">
    <property type="entry name" value="UDG-F1-like"/>
    <property type="match status" value="1"/>
</dbReference>
<dbReference type="FunFam" id="3.40.470.10:FF:000001">
    <property type="entry name" value="Uracil-DNA glycosylase"/>
    <property type="match status" value="1"/>
</dbReference>
<dbReference type="Gene3D" id="3.40.470.10">
    <property type="entry name" value="Uracil-DNA glycosylase-like domain"/>
    <property type="match status" value="1"/>
</dbReference>
<dbReference type="HAMAP" id="MF_00148">
    <property type="entry name" value="UDG"/>
    <property type="match status" value="1"/>
</dbReference>
<dbReference type="InterPro" id="IPR002043">
    <property type="entry name" value="UDG_fam1"/>
</dbReference>
<dbReference type="InterPro" id="IPR018085">
    <property type="entry name" value="Ura-DNA_Glyclase_AS"/>
</dbReference>
<dbReference type="InterPro" id="IPR005122">
    <property type="entry name" value="Uracil-DNA_glycosylase-like"/>
</dbReference>
<dbReference type="InterPro" id="IPR036895">
    <property type="entry name" value="Uracil-DNA_glycosylase-like_sf"/>
</dbReference>
<dbReference type="NCBIfam" id="NF003588">
    <property type="entry name" value="PRK05254.1-1"/>
    <property type="match status" value="1"/>
</dbReference>
<dbReference type="NCBIfam" id="NF003589">
    <property type="entry name" value="PRK05254.1-2"/>
    <property type="match status" value="1"/>
</dbReference>
<dbReference type="NCBIfam" id="NF003591">
    <property type="entry name" value="PRK05254.1-4"/>
    <property type="match status" value="1"/>
</dbReference>
<dbReference type="NCBIfam" id="NF003592">
    <property type="entry name" value="PRK05254.1-5"/>
    <property type="match status" value="1"/>
</dbReference>
<dbReference type="NCBIfam" id="TIGR00628">
    <property type="entry name" value="ung"/>
    <property type="match status" value="1"/>
</dbReference>
<dbReference type="PANTHER" id="PTHR11264">
    <property type="entry name" value="URACIL-DNA GLYCOSYLASE"/>
    <property type="match status" value="1"/>
</dbReference>
<dbReference type="PANTHER" id="PTHR11264:SF0">
    <property type="entry name" value="URACIL-DNA GLYCOSYLASE"/>
    <property type="match status" value="1"/>
</dbReference>
<dbReference type="Pfam" id="PF03167">
    <property type="entry name" value="UDG"/>
    <property type="match status" value="1"/>
</dbReference>
<dbReference type="SMART" id="SM00986">
    <property type="entry name" value="UDG"/>
    <property type="match status" value="1"/>
</dbReference>
<dbReference type="SMART" id="SM00987">
    <property type="entry name" value="UreE_C"/>
    <property type="match status" value="1"/>
</dbReference>
<dbReference type="SUPFAM" id="SSF52141">
    <property type="entry name" value="Uracil-DNA glycosylase-like"/>
    <property type="match status" value="1"/>
</dbReference>
<dbReference type="PROSITE" id="PS00130">
    <property type="entry name" value="U_DNA_GLYCOSYLASE"/>
    <property type="match status" value="1"/>
</dbReference>
<sequence>MSPSLTWHDVIGQEKEQPYFKDTLAYVAAERRAGKTIYPPQKDIFNAFRLTELDQVKVVILGQDPYHGPNQAHGLSFSVLPGVPAPPSLGNIYKELVTDIPGFQRPNHGFLQSWAEQGVLLLNTVLTVEAGKAHSHANLGWETFTDKVIAALNEHREGVIFMLWGSHAQKKGRIINTERHYILKAPHPSPLSAHRGFLGCKHFSQANQLLQQQNQQPIDWQPKLPAVE</sequence>
<protein>
    <recommendedName>
        <fullName evidence="1">Uracil-DNA glycosylase</fullName>
        <shortName evidence="1">UDG</shortName>
        <ecNumber evidence="1">3.2.2.27</ecNumber>
    </recommendedName>
</protein>
<accession>A9R3Y6</accession>
<reference key="1">
    <citation type="journal article" date="2010" name="J. Bacteriol.">
        <title>Genome sequence of the deep-rooted Yersinia pestis strain Angola reveals new insights into the evolution and pangenome of the plague bacterium.</title>
        <authorList>
            <person name="Eppinger M."/>
            <person name="Worsham P.L."/>
            <person name="Nikolich M.P."/>
            <person name="Riley D.R."/>
            <person name="Sebastian Y."/>
            <person name="Mou S."/>
            <person name="Achtman M."/>
            <person name="Lindler L.E."/>
            <person name="Ravel J."/>
        </authorList>
    </citation>
    <scope>NUCLEOTIDE SEQUENCE [LARGE SCALE GENOMIC DNA]</scope>
    <source>
        <strain>Angola</strain>
    </source>
</reference>
<comment type="function">
    <text evidence="1">Excises uracil residues from the DNA which can arise as a result of misincorporation of dUMP residues by DNA polymerase or due to deamination of cytosine.</text>
</comment>
<comment type="catalytic activity">
    <reaction evidence="1">
        <text>Hydrolyzes single-stranded DNA or mismatched double-stranded DNA and polynucleotides, releasing free uracil.</text>
        <dbReference type="EC" id="3.2.2.27"/>
    </reaction>
</comment>
<comment type="subcellular location">
    <subcellularLocation>
        <location evidence="1">Cytoplasm</location>
    </subcellularLocation>
</comment>
<comment type="similarity">
    <text evidence="1">Belongs to the uracil-DNA glycosylase (UDG) superfamily. UNG family.</text>
</comment>
<evidence type="ECO:0000255" key="1">
    <source>
        <dbReference type="HAMAP-Rule" id="MF_00148"/>
    </source>
</evidence>
<name>UNG_YERPG</name>
<feature type="chain" id="PRO_1000096620" description="Uracil-DNA glycosylase">
    <location>
        <begin position="1"/>
        <end position="228"/>
    </location>
</feature>
<feature type="active site" description="Proton acceptor" evidence="1">
    <location>
        <position position="64"/>
    </location>
</feature>
<gene>
    <name evidence="1" type="primary">ung</name>
    <name type="ordered locus">YpAngola_A3595</name>
</gene>
<proteinExistence type="inferred from homology"/>
<organism>
    <name type="scientific">Yersinia pestis bv. Antiqua (strain Angola)</name>
    <dbReference type="NCBI Taxonomy" id="349746"/>
    <lineage>
        <taxon>Bacteria</taxon>
        <taxon>Pseudomonadati</taxon>
        <taxon>Pseudomonadota</taxon>
        <taxon>Gammaproteobacteria</taxon>
        <taxon>Enterobacterales</taxon>
        <taxon>Yersiniaceae</taxon>
        <taxon>Yersinia</taxon>
    </lineage>
</organism>
<keyword id="KW-0963">Cytoplasm</keyword>
<keyword id="KW-0227">DNA damage</keyword>
<keyword id="KW-0234">DNA repair</keyword>
<keyword id="KW-0378">Hydrolase</keyword>